<feature type="chain" id="PRO_0000161257" description="Fumarate hydratase class II">
    <location>
        <begin position="1"/>
        <end position="463"/>
    </location>
</feature>
<feature type="region of interest" description="Disordered" evidence="2">
    <location>
        <begin position="121"/>
        <end position="142"/>
    </location>
</feature>
<feature type="compositionally biased region" description="Basic and acidic residues" evidence="2">
    <location>
        <begin position="121"/>
        <end position="134"/>
    </location>
</feature>
<feature type="active site" description="Proton donor/acceptor" evidence="1">
    <location>
        <position position="187"/>
    </location>
</feature>
<feature type="active site" evidence="1">
    <location>
        <position position="317"/>
    </location>
</feature>
<feature type="binding site" evidence="1">
    <location>
        <begin position="97"/>
        <end position="99"/>
    </location>
    <ligand>
        <name>substrate</name>
    </ligand>
</feature>
<feature type="binding site" evidence="1">
    <location>
        <position position="125"/>
    </location>
    <ligand>
        <name>substrate</name>
    </ligand>
</feature>
<feature type="binding site" description="in site B" evidence="1">
    <location>
        <begin position="128"/>
        <end position="131"/>
    </location>
    <ligand>
        <name>substrate</name>
    </ligand>
</feature>
<feature type="binding site" evidence="1">
    <location>
        <begin position="138"/>
        <end position="140"/>
    </location>
    <ligand>
        <name>substrate</name>
    </ligand>
</feature>
<feature type="binding site" evidence="1">
    <location>
        <position position="186"/>
    </location>
    <ligand>
        <name>substrate</name>
    </ligand>
</feature>
<feature type="binding site" evidence="1">
    <location>
        <position position="318"/>
    </location>
    <ligand>
        <name>substrate</name>
    </ligand>
</feature>
<feature type="binding site" evidence="1">
    <location>
        <begin position="323"/>
        <end position="325"/>
    </location>
    <ligand>
        <name>substrate</name>
    </ligand>
</feature>
<feature type="site" description="Important for catalytic activity" evidence="1">
    <location>
        <position position="330"/>
    </location>
</feature>
<keyword id="KW-0963">Cytoplasm</keyword>
<keyword id="KW-0456">Lyase</keyword>
<keyword id="KW-0816">Tricarboxylic acid cycle</keyword>
<name>FUMC_BORPA</name>
<proteinExistence type="inferred from homology"/>
<dbReference type="EC" id="4.2.1.2" evidence="1"/>
<dbReference type="EMBL" id="BX640434">
    <property type="protein sequence ID" value="CAE38903.1"/>
    <property type="molecule type" value="Genomic_DNA"/>
</dbReference>
<dbReference type="RefSeq" id="WP_003814327.1">
    <property type="nucleotide sequence ID" value="NC_002928.3"/>
</dbReference>
<dbReference type="SMR" id="Q7W4N9"/>
<dbReference type="GeneID" id="93205407"/>
<dbReference type="KEGG" id="bpa:BPP3619"/>
<dbReference type="HOGENOM" id="CLU_021594_4_1_4"/>
<dbReference type="UniPathway" id="UPA00223">
    <property type="reaction ID" value="UER01007"/>
</dbReference>
<dbReference type="Proteomes" id="UP000001421">
    <property type="component" value="Chromosome"/>
</dbReference>
<dbReference type="GO" id="GO:0005737">
    <property type="term" value="C:cytoplasm"/>
    <property type="evidence" value="ECO:0007669"/>
    <property type="project" value="UniProtKB-SubCell"/>
</dbReference>
<dbReference type="GO" id="GO:0004333">
    <property type="term" value="F:fumarate hydratase activity"/>
    <property type="evidence" value="ECO:0007669"/>
    <property type="project" value="UniProtKB-UniRule"/>
</dbReference>
<dbReference type="GO" id="GO:0006106">
    <property type="term" value="P:fumarate metabolic process"/>
    <property type="evidence" value="ECO:0007669"/>
    <property type="project" value="InterPro"/>
</dbReference>
<dbReference type="GO" id="GO:0006108">
    <property type="term" value="P:malate metabolic process"/>
    <property type="evidence" value="ECO:0007669"/>
    <property type="project" value="TreeGrafter"/>
</dbReference>
<dbReference type="GO" id="GO:0006099">
    <property type="term" value="P:tricarboxylic acid cycle"/>
    <property type="evidence" value="ECO:0007669"/>
    <property type="project" value="UniProtKB-UniRule"/>
</dbReference>
<dbReference type="CDD" id="cd01362">
    <property type="entry name" value="Fumarase_classII"/>
    <property type="match status" value="1"/>
</dbReference>
<dbReference type="FunFam" id="1.10.40.30:FF:000002">
    <property type="entry name" value="Fumarate hydratase class II"/>
    <property type="match status" value="1"/>
</dbReference>
<dbReference type="FunFam" id="1.10.275.10:FF:000001">
    <property type="entry name" value="Fumarate hydratase, mitochondrial"/>
    <property type="match status" value="1"/>
</dbReference>
<dbReference type="FunFam" id="1.20.200.10:FF:000001">
    <property type="entry name" value="Fumarate hydratase, mitochondrial"/>
    <property type="match status" value="1"/>
</dbReference>
<dbReference type="Gene3D" id="1.10.40.30">
    <property type="entry name" value="Fumarase/aspartase (C-terminal domain)"/>
    <property type="match status" value="1"/>
</dbReference>
<dbReference type="Gene3D" id="1.20.200.10">
    <property type="entry name" value="Fumarase/aspartase (Central domain)"/>
    <property type="match status" value="1"/>
</dbReference>
<dbReference type="Gene3D" id="1.10.275.10">
    <property type="entry name" value="Fumarase/aspartase (N-terminal domain)"/>
    <property type="match status" value="1"/>
</dbReference>
<dbReference type="HAMAP" id="MF_00743">
    <property type="entry name" value="FumaraseC"/>
    <property type="match status" value="1"/>
</dbReference>
<dbReference type="InterPro" id="IPR005677">
    <property type="entry name" value="Fum_hydII"/>
</dbReference>
<dbReference type="InterPro" id="IPR024083">
    <property type="entry name" value="Fumarase/histidase_N"/>
</dbReference>
<dbReference type="InterPro" id="IPR018951">
    <property type="entry name" value="Fumarase_C_C"/>
</dbReference>
<dbReference type="InterPro" id="IPR020557">
    <property type="entry name" value="Fumarate_lyase_CS"/>
</dbReference>
<dbReference type="InterPro" id="IPR000362">
    <property type="entry name" value="Fumarate_lyase_fam"/>
</dbReference>
<dbReference type="InterPro" id="IPR022761">
    <property type="entry name" value="Fumarate_lyase_N"/>
</dbReference>
<dbReference type="InterPro" id="IPR008948">
    <property type="entry name" value="L-Aspartase-like"/>
</dbReference>
<dbReference type="NCBIfam" id="TIGR00979">
    <property type="entry name" value="fumC_II"/>
    <property type="match status" value="1"/>
</dbReference>
<dbReference type="NCBIfam" id="NF008909">
    <property type="entry name" value="PRK12273.1"/>
    <property type="match status" value="1"/>
</dbReference>
<dbReference type="PANTHER" id="PTHR11444">
    <property type="entry name" value="ASPARTATEAMMONIA/ARGININOSUCCINATE/ADENYLOSUCCINATE LYASE"/>
    <property type="match status" value="1"/>
</dbReference>
<dbReference type="PANTHER" id="PTHR11444:SF1">
    <property type="entry name" value="FUMARATE HYDRATASE, MITOCHONDRIAL"/>
    <property type="match status" value="1"/>
</dbReference>
<dbReference type="Pfam" id="PF10415">
    <property type="entry name" value="FumaraseC_C"/>
    <property type="match status" value="1"/>
</dbReference>
<dbReference type="Pfam" id="PF00206">
    <property type="entry name" value="Lyase_1"/>
    <property type="match status" value="1"/>
</dbReference>
<dbReference type="PRINTS" id="PR00145">
    <property type="entry name" value="ARGSUCLYASE"/>
</dbReference>
<dbReference type="PRINTS" id="PR00149">
    <property type="entry name" value="FUMRATELYASE"/>
</dbReference>
<dbReference type="SUPFAM" id="SSF48557">
    <property type="entry name" value="L-aspartase-like"/>
    <property type="match status" value="1"/>
</dbReference>
<dbReference type="PROSITE" id="PS00163">
    <property type="entry name" value="FUMARATE_LYASES"/>
    <property type="match status" value="1"/>
</dbReference>
<evidence type="ECO:0000255" key="1">
    <source>
        <dbReference type="HAMAP-Rule" id="MF_00743"/>
    </source>
</evidence>
<evidence type="ECO:0000256" key="2">
    <source>
        <dbReference type="SAM" id="MobiDB-lite"/>
    </source>
</evidence>
<accession>Q7W4N9</accession>
<organism>
    <name type="scientific">Bordetella parapertussis (strain 12822 / ATCC BAA-587 / NCTC 13253)</name>
    <dbReference type="NCBI Taxonomy" id="257311"/>
    <lineage>
        <taxon>Bacteria</taxon>
        <taxon>Pseudomonadati</taxon>
        <taxon>Pseudomonadota</taxon>
        <taxon>Betaproteobacteria</taxon>
        <taxon>Burkholderiales</taxon>
        <taxon>Alcaligenaceae</taxon>
        <taxon>Bordetella</taxon>
    </lineage>
</organism>
<sequence>MKTRTEKDTFGPIEVPEQHLWGAQTQRSLHFFAISTEKMPVPLVAAMARLKRAAAKVNAELGELDPQVADAIMRAADEVVAGKWPDEFPLSVWQTGSGTQSNMNMNEVLANRASELLGGERGEGRKVHPNDHVNRGQSSNDTFPTAMHVAAAVEVEHRVLPALKALRGTLAAKSAAFYDIVKIGRTHLQDATPLTLGQEISGYVAQLDLAEQQIRATLAGLHQLAIGGTAVGTGLNAHPQFSAKVSAELAHDTGSAFVSAPNKFQALASHEALLFAHGALKTLAAGLMKIANDVRWLASGPRSGLGEISIPENEPGSSIMPGKVNPTQCEAVTMLAAQVMGNDVAINVGGASGNFELNVFKPLVIHNFLQSVRLLADGMVSFDKHCAAGIEPNRERITELVERSLMLVTALNPHIGYDKAAQIAKKAHKENLSLKEAALALGHLTEAQFAEWVVPGDMTNARR</sequence>
<gene>
    <name evidence="1" type="primary">fumC</name>
    <name type="ordered locus">BPP3619</name>
</gene>
<comment type="function">
    <text evidence="1">Involved in the TCA cycle. Catalyzes the stereospecific interconversion of fumarate to L-malate.</text>
</comment>
<comment type="catalytic activity">
    <reaction evidence="1">
        <text>(S)-malate = fumarate + H2O</text>
        <dbReference type="Rhea" id="RHEA:12460"/>
        <dbReference type="ChEBI" id="CHEBI:15377"/>
        <dbReference type="ChEBI" id="CHEBI:15589"/>
        <dbReference type="ChEBI" id="CHEBI:29806"/>
        <dbReference type="EC" id="4.2.1.2"/>
    </reaction>
</comment>
<comment type="pathway">
    <text evidence="1">Carbohydrate metabolism; tricarboxylic acid cycle; (S)-malate from fumarate: step 1/1.</text>
</comment>
<comment type="subunit">
    <text evidence="1">Homotetramer.</text>
</comment>
<comment type="subcellular location">
    <subcellularLocation>
        <location evidence="1">Cytoplasm</location>
    </subcellularLocation>
</comment>
<comment type="miscellaneous">
    <text evidence="1">There are 2 substrate-binding sites: the catalytic A site, and the non-catalytic B site that may play a role in the transfer of substrate or product between the active site and the solvent. Alternatively, the B site may bind allosteric effectors.</text>
</comment>
<comment type="similarity">
    <text evidence="1">Belongs to the class-II fumarase/aspartase family. Fumarase subfamily.</text>
</comment>
<protein>
    <recommendedName>
        <fullName evidence="1">Fumarate hydratase class II</fullName>
        <shortName evidence="1">Fumarase C</shortName>
        <ecNumber evidence="1">4.2.1.2</ecNumber>
    </recommendedName>
    <alternativeName>
        <fullName evidence="1">Aerobic fumarase</fullName>
    </alternativeName>
    <alternativeName>
        <fullName evidence="1">Iron-independent fumarase</fullName>
    </alternativeName>
</protein>
<reference key="1">
    <citation type="journal article" date="2003" name="Nat. Genet.">
        <title>Comparative analysis of the genome sequences of Bordetella pertussis, Bordetella parapertussis and Bordetella bronchiseptica.</title>
        <authorList>
            <person name="Parkhill J."/>
            <person name="Sebaihia M."/>
            <person name="Preston A."/>
            <person name="Murphy L.D."/>
            <person name="Thomson N.R."/>
            <person name="Harris D.E."/>
            <person name="Holden M.T.G."/>
            <person name="Churcher C.M."/>
            <person name="Bentley S.D."/>
            <person name="Mungall K.L."/>
            <person name="Cerdeno-Tarraga A.-M."/>
            <person name="Temple L."/>
            <person name="James K.D."/>
            <person name="Harris B."/>
            <person name="Quail M.A."/>
            <person name="Achtman M."/>
            <person name="Atkin R."/>
            <person name="Baker S."/>
            <person name="Basham D."/>
            <person name="Bason N."/>
            <person name="Cherevach I."/>
            <person name="Chillingworth T."/>
            <person name="Collins M."/>
            <person name="Cronin A."/>
            <person name="Davis P."/>
            <person name="Doggett J."/>
            <person name="Feltwell T."/>
            <person name="Goble A."/>
            <person name="Hamlin N."/>
            <person name="Hauser H."/>
            <person name="Holroyd S."/>
            <person name="Jagels K."/>
            <person name="Leather S."/>
            <person name="Moule S."/>
            <person name="Norberczak H."/>
            <person name="O'Neil S."/>
            <person name="Ormond D."/>
            <person name="Price C."/>
            <person name="Rabbinowitsch E."/>
            <person name="Rutter S."/>
            <person name="Sanders M."/>
            <person name="Saunders D."/>
            <person name="Seeger K."/>
            <person name="Sharp S."/>
            <person name="Simmonds M."/>
            <person name="Skelton J."/>
            <person name="Squares R."/>
            <person name="Squares S."/>
            <person name="Stevens K."/>
            <person name="Unwin L."/>
            <person name="Whitehead S."/>
            <person name="Barrell B.G."/>
            <person name="Maskell D.J."/>
        </authorList>
    </citation>
    <scope>NUCLEOTIDE SEQUENCE [LARGE SCALE GENOMIC DNA]</scope>
    <source>
        <strain>12822 / ATCC BAA-587 / NCTC 13253</strain>
    </source>
</reference>